<reference key="1">
    <citation type="submission" date="2006-03" db="EMBL/GenBank/DDBJ databases">
        <title>Complete sequence of chromosome of Nitrobacter hamburgensis X14.</title>
        <authorList>
            <consortium name="US DOE Joint Genome Institute"/>
            <person name="Copeland A."/>
            <person name="Lucas S."/>
            <person name="Lapidus A."/>
            <person name="Barry K."/>
            <person name="Detter J.C."/>
            <person name="Glavina del Rio T."/>
            <person name="Hammon N."/>
            <person name="Israni S."/>
            <person name="Dalin E."/>
            <person name="Tice H."/>
            <person name="Pitluck S."/>
            <person name="Chain P."/>
            <person name="Malfatti S."/>
            <person name="Shin M."/>
            <person name="Vergez L."/>
            <person name="Schmutz J."/>
            <person name="Larimer F."/>
            <person name="Land M."/>
            <person name="Hauser L."/>
            <person name="Kyrpides N."/>
            <person name="Ivanova N."/>
            <person name="Ward B."/>
            <person name="Arp D."/>
            <person name="Klotz M."/>
            <person name="Stein L."/>
            <person name="O'Mullan G."/>
            <person name="Starkenburg S."/>
            <person name="Sayavedra L."/>
            <person name="Poret-Peterson A.T."/>
            <person name="Gentry M.E."/>
            <person name="Bruce D."/>
            <person name="Richardson P."/>
        </authorList>
    </citation>
    <scope>NUCLEOTIDE SEQUENCE [LARGE SCALE GENOMIC DNA]</scope>
    <source>
        <strain>DSM 10229 / NCIMB 13809 / X14</strain>
    </source>
</reference>
<proteinExistence type="inferred from homology"/>
<organism>
    <name type="scientific">Nitrobacter hamburgensis (strain DSM 10229 / NCIMB 13809 / X14)</name>
    <dbReference type="NCBI Taxonomy" id="323097"/>
    <lineage>
        <taxon>Bacteria</taxon>
        <taxon>Pseudomonadati</taxon>
        <taxon>Pseudomonadota</taxon>
        <taxon>Alphaproteobacteria</taxon>
        <taxon>Hyphomicrobiales</taxon>
        <taxon>Nitrobacteraceae</taxon>
        <taxon>Nitrobacter</taxon>
    </lineage>
</organism>
<sequence>MDRIRIVGGNKLNGTIPISGAKNAALPLMIAALLTEETLILDNVPRLADVAQLQRILGNHGVDIMSAGKRSGDHEYQGQTLHISAANVIDTTAPYELVSKMRASFWVIAPLLARMHETKVSLPGGCAIGTRPVDLLIMALEKLGAEVAIDGGYVIAKAPGGLTGAEVDFPKVTVSGTHVALMAATLAKGTTVITNAACEPEIVDVADCLNKMGARVSGAGTPRIVIEGVSRLGGARHTVLPDRIETGTYAMAVAMTGGDVLLRGARPELLQSALDVLTEAGAVITPNNEGIRVARNGAGINPVIVSTAPFPGFPTDLQAQLMALMTRAKGSSHITETIFENRFMHVQELARFGARIHLDGETATIEGIGILRGAPVMATDLRASVSLVIAGLAAEGETMVNRVYHLDRGFERLEEKLSGCGASIERISD</sequence>
<gene>
    <name evidence="1" type="primary">murA</name>
    <name type="ordered locus">Nham_0285</name>
</gene>
<keyword id="KW-0131">Cell cycle</keyword>
<keyword id="KW-0132">Cell division</keyword>
<keyword id="KW-0133">Cell shape</keyword>
<keyword id="KW-0961">Cell wall biogenesis/degradation</keyword>
<keyword id="KW-0963">Cytoplasm</keyword>
<keyword id="KW-0573">Peptidoglycan synthesis</keyword>
<keyword id="KW-0670">Pyruvate</keyword>
<keyword id="KW-1185">Reference proteome</keyword>
<keyword id="KW-0808">Transferase</keyword>
<accession>Q1QRG4</accession>
<comment type="function">
    <text evidence="1">Cell wall formation. Adds enolpyruvyl to UDP-N-acetylglucosamine.</text>
</comment>
<comment type="catalytic activity">
    <reaction evidence="1">
        <text>phosphoenolpyruvate + UDP-N-acetyl-alpha-D-glucosamine = UDP-N-acetyl-3-O-(1-carboxyvinyl)-alpha-D-glucosamine + phosphate</text>
        <dbReference type="Rhea" id="RHEA:18681"/>
        <dbReference type="ChEBI" id="CHEBI:43474"/>
        <dbReference type="ChEBI" id="CHEBI:57705"/>
        <dbReference type="ChEBI" id="CHEBI:58702"/>
        <dbReference type="ChEBI" id="CHEBI:68483"/>
        <dbReference type="EC" id="2.5.1.7"/>
    </reaction>
</comment>
<comment type="pathway">
    <text evidence="1">Cell wall biogenesis; peptidoglycan biosynthesis.</text>
</comment>
<comment type="subcellular location">
    <subcellularLocation>
        <location evidence="1">Cytoplasm</location>
    </subcellularLocation>
</comment>
<comment type="similarity">
    <text evidence="1">Belongs to the EPSP synthase family. MurA subfamily.</text>
</comment>
<name>MURA_NITHX</name>
<evidence type="ECO:0000255" key="1">
    <source>
        <dbReference type="HAMAP-Rule" id="MF_00111"/>
    </source>
</evidence>
<protein>
    <recommendedName>
        <fullName evidence="1">UDP-N-acetylglucosamine 1-carboxyvinyltransferase</fullName>
        <ecNumber evidence="1">2.5.1.7</ecNumber>
    </recommendedName>
    <alternativeName>
        <fullName evidence="1">Enoylpyruvate transferase</fullName>
    </alternativeName>
    <alternativeName>
        <fullName evidence="1">UDP-N-acetylglucosamine enolpyruvyl transferase</fullName>
        <shortName evidence="1">EPT</shortName>
    </alternativeName>
</protein>
<dbReference type="EC" id="2.5.1.7" evidence="1"/>
<dbReference type="EMBL" id="CP000319">
    <property type="protein sequence ID" value="ABE61183.1"/>
    <property type="molecule type" value="Genomic_DNA"/>
</dbReference>
<dbReference type="RefSeq" id="WP_011508887.1">
    <property type="nucleotide sequence ID" value="NC_007964.1"/>
</dbReference>
<dbReference type="SMR" id="Q1QRG4"/>
<dbReference type="STRING" id="323097.Nham_0285"/>
<dbReference type="KEGG" id="nha:Nham_0285"/>
<dbReference type="eggNOG" id="COG0766">
    <property type="taxonomic scope" value="Bacteria"/>
</dbReference>
<dbReference type="HOGENOM" id="CLU_027387_0_0_5"/>
<dbReference type="OrthoDB" id="9803760at2"/>
<dbReference type="UniPathway" id="UPA00219"/>
<dbReference type="Proteomes" id="UP000001953">
    <property type="component" value="Chromosome"/>
</dbReference>
<dbReference type="GO" id="GO:0005737">
    <property type="term" value="C:cytoplasm"/>
    <property type="evidence" value="ECO:0007669"/>
    <property type="project" value="UniProtKB-SubCell"/>
</dbReference>
<dbReference type="GO" id="GO:0008760">
    <property type="term" value="F:UDP-N-acetylglucosamine 1-carboxyvinyltransferase activity"/>
    <property type="evidence" value="ECO:0007669"/>
    <property type="project" value="UniProtKB-UniRule"/>
</dbReference>
<dbReference type="GO" id="GO:0051301">
    <property type="term" value="P:cell division"/>
    <property type="evidence" value="ECO:0007669"/>
    <property type="project" value="UniProtKB-KW"/>
</dbReference>
<dbReference type="GO" id="GO:0071555">
    <property type="term" value="P:cell wall organization"/>
    <property type="evidence" value="ECO:0007669"/>
    <property type="project" value="UniProtKB-KW"/>
</dbReference>
<dbReference type="GO" id="GO:0009252">
    <property type="term" value="P:peptidoglycan biosynthetic process"/>
    <property type="evidence" value="ECO:0007669"/>
    <property type="project" value="UniProtKB-UniRule"/>
</dbReference>
<dbReference type="GO" id="GO:0008360">
    <property type="term" value="P:regulation of cell shape"/>
    <property type="evidence" value="ECO:0007669"/>
    <property type="project" value="UniProtKB-KW"/>
</dbReference>
<dbReference type="GO" id="GO:0019277">
    <property type="term" value="P:UDP-N-acetylgalactosamine biosynthetic process"/>
    <property type="evidence" value="ECO:0007669"/>
    <property type="project" value="InterPro"/>
</dbReference>
<dbReference type="CDD" id="cd01555">
    <property type="entry name" value="UdpNAET"/>
    <property type="match status" value="1"/>
</dbReference>
<dbReference type="FunFam" id="3.65.10.10:FF:000001">
    <property type="entry name" value="UDP-N-acetylglucosamine 1-carboxyvinyltransferase"/>
    <property type="match status" value="1"/>
</dbReference>
<dbReference type="Gene3D" id="3.65.10.10">
    <property type="entry name" value="Enolpyruvate transferase domain"/>
    <property type="match status" value="2"/>
</dbReference>
<dbReference type="HAMAP" id="MF_00111">
    <property type="entry name" value="MurA"/>
    <property type="match status" value="1"/>
</dbReference>
<dbReference type="InterPro" id="IPR001986">
    <property type="entry name" value="Enolpyruvate_Tfrase_dom"/>
</dbReference>
<dbReference type="InterPro" id="IPR036968">
    <property type="entry name" value="Enolpyruvate_Tfrase_sf"/>
</dbReference>
<dbReference type="InterPro" id="IPR050068">
    <property type="entry name" value="MurA_subfamily"/>
</dbReference>
<dbReference type="InterPro" id="IPR013792">
    <property type="entry name" value="RNA3'P_cycl/enolpyr_Trfase_a/b"/>
</dbReference>
<dbReference type="InterPro" id="IPR005750">
    <property type="entry name" value="UDP_GlcNAc_COvinyl_MurA"/>
</dbReference>
<dbReference type="NCBIfam" id="TIGR01072">
    <property type="entry name" value="murA"/>
    <property type="match status" value="1"/>
</dbReference>
<dbReference type="NCBIfam" id="NF006873">
    <property type="entry name" value="PRK09369.1"/>
    <property type="match status" value="1"/>
</dbReference>
<dbReference type="PANTHER" id="PTHR43783">
    <property type="entry name" value="UDP-N-ACETYLGLUCOSAMINE 1-CARBOXYVINYLTRANSFERASE"/>
    <property type="match status" value="1"/>
</dbReference>
<dbReference type="PANTHER" id="PTHR43783:SF1">
    <property type="entry name" value="UDP-N-ACETYLGLUCOSAMINE 1-CARBOXYVINYLTRANSFERASE"/>
    <property type="match status" value="1"/>
</dbReference>
<dbReference type="Pfam" id="PF00275">
    <property type="entry name" value="EPSP_synthase"/>
    <property type="match status" value="1"/>
</dbReference>
<dbReference type="SUPFAM" id="SSF55205">
    <property type="entry name" value="EPT/RTPC-like"/>
    <property type="match status" value="1"/>
</dbReference>
<feature type="chain" id="PRO_1000023060" description="UDP-N-acetylglucosamine 1-carboxyvinyltransferase">
    <location>
        <begin position="1"/>
        <end position="429"/>
    </location>
</feature>
<feature type="active site" description="Proton donor" evidence="1">
    <location>
        <position position="126"/>
    </location>
</feature>
<feature type="binding site" evidence="1">
    <location>
        <begin position="22"/>
        <end position="23"/>
    </location>
    <ligand>
        <name>phosphoenolpyruvate</name>
        <dbReference type="ChEBI" id="CHEBI:58702"/>
    </ligand>
</feature>
<feature type="binding site" evidence="1">
    <location>
        <position position="102"/>
    </location>
    <ligand>
        <name>UDP-N-acetyl-alpha-D-glucosamine</name>
        <dbReference type="ChEBI" id="CHEBI:57705"/>
    </ligand>
</feature>
<feature type="binding site" evidence="1">
    <location>
        <begin position="131"/>
        <end position="135"/>
    </location>
    <ligand>
        <name>UDP-N-acetyl-alpha-D-glucosamine</name>
        <dbReference type="ChEBI" id="CHEBI:57705"/>
    </ligand>
</feature>
<feature type="binding site" evidence="1">
    <location>
        <position position="316"/>
    </location>
    <ligand>
        <name>UDP-N-acetyl-alpha-D-glucosamine</name>
        <dbReference type="ChEBI" id="CHEBI:57705"/>
    </ligand>
</feature>
<feature type="binding site" evidence="1">
    <location>
        <position position="338"/>
    </location>
    <ligand>
        <name>UDP-N-acetyl-alpha-D-glucosamine</name>
        <dbReference type="ChEBI" id="CHEBI:57705"/>
    </ligand>
</feature>
<feature type="modified residue" description="2-(S-cysteinyl)pyruvic acid O-phosphothioketal" evidence="1">
    <location>
        <position position="126"/>
    </location>
</feature>